<proteinExistence type="evidence at protein level"/>
<sequence length="274" mass="30874">MTVRKNQATLTADEKRRFVAAVLELKRSGRYDEFVTTHNAFIIGDTDAGERTGHRSPSFLPWHRRYLLEFERALQSVDASVALPYWDWSADRTARASLWAPDFLGGTGRSLDGRVMDGPFAASAGNWPINVRVDGRAYLRRSLGTAVRELPTRAEVESVLGMATYDTAPWNSASDGFRNHLEGWRGVNLHNRVHVWVGGQMATGMSPNDPVFWLHHAYVDKLWAEWQRRHPGSGYLPAAGTPDVVDLNDRMKPWNDTSPADLLDHTAHYTFDTD</sequence>
<protein>
    <recommendedName>
        <fullName>Tyrosinase</fullName>
        <ecNumber>1.14.18.1</ecNumber>
    </recommendedName>
    <alternativeName>
        <fullName>Monophenol monooxygenase</fullName>
    </alternativeName>
</protein>
<dbReference type="EC" id="1.14.18.1"/>
<dbReference type="EMBL" id="M11302">
    <property type="protein sequence ID" value="AAA26834.1"/>
    <property type="molecule type" value="Genomic_DNA"/>
</dbReference>
<dbReference type="PIR" id="A24089">
    <property type="entry name" value="A24089"/>
</dbReference>
<dbReference type="RefSeq" id="WP_043498008.1">
    <property type="nucleotide sequence ID" value="NZ_CP009438.1"/>
</dbReference>
<dbReference type="SMR" id="P06845"/>
<dbReference type="STRING" id="1907.SGLAU_02720"/>
<dbReference type="eggNOG" id="COG2304">
    <property type="taxonomic scope" value="Bacteria"/>
</dbReference>
<dbReference type="OrthoDB" id="2874181at2"/>
<dbReference type="GO" id="GO:0046872">
    <property type="term" value="F:metal ion binding"/>
    <property type="evidence" value="ECO:0007669"/>
    <property type="project" value="UniProtKB-KW"/>
</dbReference>
<dbReference type="GO" id="GO:0004503">
    <property type="term" value="F:tyrosinase activity"/>
    <property type="evidence" value="ECO:0007669"/>
    <property type="project" value="UniProtKB-EC"/>
</dbReference>
<dbReference type="GO" id="GO:0042438">
    <property type="term" value="P:melanin biosynthetic process"/>
    <property type="evidence" value="ECO:0007669"/>
    <property type="project" value="UniProtKB-KW"/>
</dbReference>
<dbReference type="Gene3D" id="1.10.1280.10">
    <property type="entry name" value="Di-copper center containing domain from catechol oxidase"/>
    <property type="match status" value="1"/>
</dbReference>
<dbReference type="InterPro" id="IPR008922">
    <property type="entry name" value="Di-copper_centre_dom_sf"/>
</dbReference>
<dbReference type="InterPro" id="IPR050316">
    <property type="entry name" value="Tyrosinase/Hemocyanin"/>
</dbReference>
<dbReference type="InterPro" id="IPR002227">
    <property type="entry name" value="Tyrosinase_Cu-bd"/>
</dbReference>
<dbReference type="NCBIfam" id="NF047834">
    <property type="entry name" value="TyrosinaseMelC2"/>
    <property type="match status" value="1"/>
</dbReference>
<dbReference type="PANTHER" id="PTHR11474">
    <property type="entry name" value="TYROSINASE FAMILY MEMBER"/>
    <property type="match status" value="1"/>
</dbReference>
<dbReference type="PANTHER" id="PTHR11474:SF126">
    <property type="entry name" value="TYROSINASE-LIKE PROTEIN TYR-1-RELATED"/>
    <property type="match status" value="1"/>
</dbReference>
<dbReference type="Pfam" id="PF00264">
    <property type="entry name" value="Tyrosinase"/>
    <property type="match status" value="1"/>
</dbReference>
<dbReference type="PRINTS" id="PR00092">
    <property type="entry name" value="TYROSINASE"/>
</dbReference>
<dbReference type="SUPFAM" id="SSF48056">
    <property type="entry name" value="Di-copper centre-containing domain"/>
    <property type="match status" value="1"/>
</dbReference>
<dbReference type="PROSITE" id="PS00497">
    <property type="entry name" value="TYROSINASE_1"/>
    <property type="match status" value="1"/>
</dbReference>
<dbReference type="PROSITE" id="PS00498">
    <property type="entry name" value="TYROSINASE_2"/>
    <property type="match status" value="1"/>
</dbReference>
<accession>P06845</accession>
<keyword id="KW-0186">Copper</keyword>
<keyword id="KW-0903">Direct protein sequencing</keyword>
<keyword id="KW-0470">Melanin biosynthesis</keyword>
<keyword id="KW-0479">Metal-binding</keyword>
<keyword id="KW-0503">Monooxygenase</keyword>
<keyword id="KW-0560">Oxidoreductase</keyword>
<feature type="initiator methionine" description="Removed">
    <location>
        <position position="1"/>
    </location>
</feature>
<feature type="chain" id="PRO_0000186738" description="Tyrosinase">
    <location>
        <begin position="2"/>
        <end position="274"/>
    </location>
</feature>
<feature type="binding site" evidence="1 2">
    <location>
        <position position="38"/>
    </location>
    <ligand>
        <name>Cu cation</name>
        <dbReference type="ChEBI" id="CHEBI:23378"/>
        <label>A</label>
    </ligand>
</feature>
<feature type="binding site" evidence="1 2">
    <location>
        <position position="54"/>
    </location>
    <ligand>
        <name>Cu cation</name>
        <dbReference type="ChEBI" id="CHEBI:23378"/>
        <label>A</label>
    </ligand>
</feature>
<feature type="binding site" evidence="1 2">
    <location>
        <position position="63"/>
    </location>
    <ligand>
        <name>Cu cation</name>
        <dbReference type="ChEBI" id="CHEBI:23378"/>
        <label>A</label>
    </ligand>
</feature>
<feature type="binding site" evidence="1 2">
    <location>
        <position position="190"/>
    </location>
    <ligand>
        <name>Cu cation</name>
        <dbReference type="ChEBI" id="CHEBI:23378"/>
        <label>B</label>
    </ligand>
</feature>
<feature type="binding site" evidence="1 2">
    <location>
        <position position="194"/>
    </location>
    <ligand>
        <name>Cu cation</name>
        <dbReference type="ChEBI" id="CHEBI:23378"/>
        <label>B</label>
    </ligand>
</feature>
<feature type="binding site" evidence="1 2">
    <location>
        <position position="216"/>
    </location>
    <ligand>
        <name>Cu cation</name>
        <dbReference type="ChEBI" id="CHEBI:23378"/>
        <label>B</label>
    </ligand>
</feature>
<feature type="mutagenesis site" description="Loss of activity." evidence="1 2">
    <original>H</original>
    <variation>Q</variation>
    <location>
        <position position="38"/>
    </location>
</feature>
<feature type="mutagenesis site" description="Loss of activity." evidence="1 2">
    <original>H</original>
    <variation>Q</variation>
    <location>
        <position position="54"/>
    </location>
</feature>
<feature type="mutagenesis site" description="Loss of activity." evidence="1 2">
    <original>H</original>
    <variation>N</variation>
    <location>
        <position position="63"/>
    </location>
</feature>
<feature type="mutagenesis site" description="Loss of activity." evidence="1 2">
    <original>H</original>
    <variation>N</variation>
    <location>
        <position position="190"/>
    </location>
</feature>
<feature type="mutagenesis site" description="Loss of activity." evidence="1 2">
    <original>N</original>
    <variation>Q</variation>
    <location>
        <position position="191"/>
    </location>
</feature>
<feature type="mutagenesis site" description="Loss of activity." evidence="1 2">
    <original>H</original>
    <variation>Q</variation>
    <location>
        <position position="194"/>
    </location>
</feature>
<feature type="mutagenesis site" description="Loss of activity." evidence="1 2">
    <original>H</original>
    <variation>Q</variation>
    <location>
        <position position="216"/>
    </location>
</feature>
<feature type="sequence conflict" description="In Ref. 1; AAA26834." evidence="3" ref="1">
    <original>H</original>
    <variation>N</variation>
    <location>
        <position position="216"/>
    </location>
</feature>
<name>TYRO_STRGA</name>
<reference key="1">
    <citation type="journal article" date="1985" name="Biochemistry">
        <title>Primary structure of tyrosinase from Streptomyces glaucescens.</title>
        <authorList>
            <person name="Huber M."/>
            <person name="Hintermann G."/>
            <person name="Lerch K."/>
        </authorList>
    </citation>
    <scope>NUCLEOTIDE SEQUENCE [GENOMIC DNA]</scope>
    <scope>PARTIAL PROTEIN SEQUENCE</scope>
    <source>
        <strain>DSM 40716 / ETH 22794 / Tue 49</strain>
    </source>
</reference>
<reference key="2">
    <citation type="journal article" date="1988" name="Biochemistry">
        <title>Identification of two histidines as copper ligands in Streptomyces glaucescens tyrosinase.</title>
        <authorList>
            <person name="Huber M."/>
            <person name="Lerch K."/>
        </authorList>
    </citation>
    <scope>COPPER-LIGANDS</scope>
    <scope>MUTAGENESIS</scope>
    <scope>COFACTOR</scope>
    <source>
        <strain>DSM 40716 / ETH 22794 / Tue 49</strain>
    </source>
</reference>
<reference key="3">
    <citation type="journal article" date="1991" name="Biochem. J.">
        <title>Albino mutants of Streptomyces glaucescens tyrosinase.</title>
        <authorList>
            <person name="Jackman M.P."/>
            <person name="Hajnal A."/>
            <person name="Lerch K."/>
        </authorList>
    </citation>
    <scope>COPPER-LIGANDS</scope>
    <scope>MUTAGENESIS</scope>
    <scope>COFACTOR</scope>
    <source>
        <strain>DSM 40716 / ETH 22794 / Tue 49</strain>
    </source>
</reference>
<evidence type="ECO:0000269" key="1">
    <source>
    </source>
</evidence>
<evidence type="ECO:0000269" key="2">
    <source>
    </source>
</evidence>
<evidence type="ECO:0000305" key="3"/>
<organism>
    <name type="scientific">Streptomyces glaucescens</name>
    <dbReference type="NCBI Taxonomy" id="1907"/>
    <lineage>
        <taxon>Bacteria</taxon>
        <taxon>Bacillati</taxon>
        <taxon>Actinomycetota</taxon>
        <taxon>Actinomycetes</taxon>
        <taxon>Kitasatosporales</taxon>
        <taxon>Streptomycetaceae</taxon>
        <taxon>Streptomyces</taxon>
    </lineage>
</organism>
<gene>
    <name type="primary">melC2</name>
    <name type="synonym">mel</name>
</gene>
<comment type="function">
    <text>This is a copper-containing oxidase that functions in the formation of pigments such as melanins and other polyphenolic compounds.</text>
</comment>
<comment type="catalytic activity">
    <reaction>
        <text>2 L-dopa + O2 = 2 L-dopaquinone + 2 H2O</text>
        <dbReference type="Rhea" id="RHEA:34287"/>
        <dbReference type="ChEBI" id="CHEBI:15377"/>
        <dbReference type="ChEBI" id="CHEBI:15379"/>
        <dbReference type="ChEBI" id="CHEBI:57504"/>
        <dbReference type="ChEBI" id="CHEBI:57924"/>
        <dbReference type="EC" id="1.14.18.1"/>
    </reaction>
</comment>
<comment type="catalytic activity">
    <reaction>
        <text>L-tyrosine + O2 = L-dopaquinone + H2O</text>
        <dbReference type="Rhea" id="RHEA:18117"/>
        <dbReference type="ChEBI" id="CHEBI:15377"/>
        <dbReference type="ChEBI" id="CHEBI:15379"/>
        <dbReference type="ChEBI" id="CHEBI:57924"/>
        <dbReference type="ChEBI" id="CHEBI:58315"/>
        <dbReference type="EC" id="1.14.18.1"/>
    </reaction>
</comment>
<comment type="cofactor">
    <cofactor evidence="1 2">
        <name>Cu(2+)</name>
        <dbReference type="ChEBI" id="CHEBI:29036"/>
    </cofactor>
    <text evidence="1 2">Binds 2 copper ions per subunit.</text>
</comment>
<comment type="miscellaneous">
    <text>The extra- and intra-cellular tyrosinases are identical.</text>
</comment>
<comment type="similarity">
    <text evidence="3">Belongs to the tyrosinase family.</text>
</comment>